<proteinExistence type="evidence at protein level"/>
<comment type="function">
    <text evidence="3">Catalyzes the hydrolysis of aliphatic N-carbamoyl-L-alpha-amino acids to free L-alpha-amino acids. Is strictly L-specific since it is inactive toward N-carbamoyl-D-alpha-amino acids. Is not able to use aromatic N-carbamoyl-L-alpha-amino acids like N-carbamoyl-L-tryptophan and N-carbamoyl-L-phenylalanine as substrates, but is also able to hydrolyze N-acetyl-L-methionine.</text>
</comment>
<comment type="catalytic activity">
    <reaction evidence="3">
        <text>an N-carbamoyl-L-alpha-amino acid + H2O + 2 H(+) = an L-alpha-amino acid + NH4(+) + CO2</text>
        <dbReference type="Rhea" id="RHEA:17581"/>
        <dbReference type="ChEBI" id="CHEBI:15377"/>
        <dbReference type="ChEBI" id="CHEBI:15378"/>
        <dbReference type="ChEBI" id="CHEBI:16526"/>
        <dbReference type="ChEBI" id="CHEBI:28938"/>
        <dbReference type="ChEBI" id="CHEBI:58865"/>
        <dbReference type="ChEBI" id="CHEBI:59869"/>
        <dbReference type="EC" id="3.5.1.87"/>
    </reaction>
    <physiologicalReaction direction="left-to-right" evidence="6">
        <dbReference type="Rhea" id="RHEA:17582"/>
    </physiologicalReaction>
</comment>
<comment type="catalytic activity">
    <reaction evidence="3">
        <text>N-carbamoyl-L-methionine + H2O + 2 H(+) = L-methionine + NH4(+) + CO2</text>
        <dbReference type="Rhea" id="RHEA:72783"/>
        <dbReference type="ChEBI" id="CHEBI:15377"/>
        <dbReference type="ChEBI" id="CHEBI:15378"/>
        <dbReference type="ChEBI" id="CHEBI:16526"/>
        <dbReference type="ChEBI" id="CHEBI:28938"/>
        <dbReference type="ChEBI" id="CHEBI:57844"/>
        <dbReference type="ChEBI" id="CHEBI:137116"/>
    </reaction>
    <physiologicalReaction direction="left-to-right" evidence="6">
        <dbReference type="Rhea" id="RHEA:72784"/>
    </physiologicalReaction>
</comment>
<comment type="catalytic activity">
    <reaction evidence="3">
        <text>N-acetyl-L-methionine + H2O = L-methionine + acetate</text>
        <dbReference type="Rhea" id="RHEA:67440"/>
        <dbReference type="ChEBI" id="CHEBI:15377"/>
        <dbReference type="ChEBI" id="CHEBI:30089"/>
        <dbReference type="ChEBI" id="CHEBI:57844"/>
        <dbReference type="ChEBI" id="CHEBI:71670"/>
    </reaction>
    <physiologicalReaction direction="left-to-right" evidence="6">
        <dbReference type="Rhea" id="RHEA:67441"/>
    </physiologicalReaction>
</comment>
<comment type="catalytic activity">
    <reaction evidence="3">
        <text>N-carbamoyl-L-alanine + H2O + 2 H(+) = L-alanine + NH4(+) + CO2</text>
        <dbReference type="Rhea" id="RHEA:72827"/>
        <dbReference type="ChEBI" id="CHEBI:15377"/>
        <dbReference type="ChEBI" id="CHEBI:15378"/>
        <dbReference type="ChEBI" id="CHEBI:16526"/>
        <dbReference type="ChEBI" id="CHEBI:28938"/>
        <dbReference type="ChEBI" id="CHEBI:57972"/>
        <dbReference type="ChEBI" id="CHEBI:192535"/>
    </reaction>
    <physiologicalReaction direction="left-to-right" evidence="6">
        <dbReference type="Rhea" id="RHEA:72828"/>
    </physiologicalReaction>
</comment>
<comment type="catalytic activity">
    <reaction evidence="3">
        <text>N-carbamoyl-L-glutamate + H2O + 2 H(+) = L-glutamate + NH4(+) + CO2</text>
        <dbReference type="Rhea" id="RHEA:84011"/>
        <dbReference type="ChEBI" id="CHEBI:15377"/>
        <dbReference type="ChEBI" id="CHEBI:15378"/>
        <dbReference type="ChEBI" id="CHEBI:16526"/>
        <dbReference type="ChEBI" id="CHEBI:28938"/>
        <dbReference type="ChEBI" id="CHEBI:29985"/>
        <dbReference type="ChEBI" id="CHEBI:229697"/>
    </reaction>
    <physiologicalReaction direction="left-to-right" evidence="6">
        <dbReference type="Rhea" id="RHEA:84012"/>
    </physiologicalReaction>
</comment>
<comment type="catalytic activity">
    <reaction evidence="3">
        <text>N-carbamoylglycine + H2O + 2 H(+) = glycine + NH4(+) + CO2</text>
        <dbReference type="Rhea" id="RHEA:84015"/>
        <dbReference type="ChEBI" id="CHEBI:15377"/>
        <dbReference type="ChEBI" id="CHEBI:15378"/>
        <dbReference type="ChEBI" id="CHEBI:16526"/>
        <dbReference type="ChEBI" id="CHEBI:28938"/>
        <dbReference type="ChEBI" id="CHEBI:57305"/>
        <dbReference type="ChEBI" id="CHEBI:233552"/>
    </reaction>
    <physiologicalReaction direction="left-to-right" evidence="6">
        <dbReference type="Rhea" id="RHEA:84016"/>
    </physiologicalReaction>
</comment>
<comment type="catalytic activity">
    <reaction evidence="3">
        <text>N-carbamoyl-L-leucine + H2O + 2 H(+) = L-leucine + NH4(+) + CO2</text>
        <dbReference type="Rhea" id="RHEA:84019"/>
        <dbReference type="ChEBI" id="CHEBI:15377"/>
        <dbReference type="ChEBI" id="CHEBI:15378"/>
        <dbReference type="ChEBI" id="CHEBI:16526"/>
        <dbReference type="ChEBI" id="CHEBI:28938"/>
        <dbReference type="ChEBI" id="CHEBI:57427"/>
        <dbReference type="ChEBI" id="CHEBI:233553"/>
    </reaction>
    <physiologicalReaction direction="left-to-right" evidence="6">
        <dbReference type="Rhea" id="RHEA:84020"/>
    </physiologicalReaction>
</comment>
<comment type="cofactor">
    <cofactor evidence="2">
        <name>Mn(2+)</name>
        <dbReference type="ChEBI" id="CHEBI:29035"/>
    </cofactor>
    <cofactor evidence="2">
        <name>Ni(2+)</name>
        <dbReference type="ChEBI" id="CHEBI:49786"/>
    </cofactor>
    <cofactor evidence="2">
        <name>Co(2+)</name>
        <dbReference type="ChEBI" id="CHEBI:48828"/>
    </cofactor>
    <cofactor evidence="2">
        <name>Fe(2+)</name>
        <dbReference type="ChEBI" id="CHEBI:29033"/>
    </cofactor>
    <text evidence="2">Requires divalent metal cations for activity. Binds 2 divalent metal cations per subunit.</text>
</comment>
<comment type="subunit">
    <text evidence="1">Homodimer.</text>
</comment>
<comment type="similarity">
    <text evidence="5">Belongs to the peptidase M20 family.</text>
</comment>
<reference key="1">
    <citation type="journal article" date="1997" name="Appl. Environ. Microbiol.">
        <title>Two amino acid amidohydrolase genes encoding L-stereospecific carbamoylase and aminoacylase are organized in a common operon in Bacillus stearothermophilus.</title>
        <authorList>
            <person name="Batisse N."/>
            <person name="Weigel P."/>
            <person name="Lecocq M."/>
            <person name="Sakanyan V."/>
        </authorList>
    </citation>
    <scope>NUCLEOTIDE SEQUENCE [GENOMIC DNA]</scope>
    <scope>FUNCTION</scope>
    <scope>CATALYTIC ACTIVITY</scope>
    <scope>SUBSTRATE SPECIFICITY</scope>
    <source>
        <strain>NCIMB 8224 / CCM 2186 / NCA C-1235.1 / VKM B-718</strain>
    </source>
</reference>
<reference key="2">
    <citation type="journal article" date="1993" name="Appl. Environ. Microbiol.">
        <title>Gene cloning, sequence analysis, purification, and characterization of a thermostable aminoacylase from Bacillus stearothermophilus.</title>
        <authorList>
            <person name="Sakanyan V."/>
            <person name="Desmarez L."/>
            <person name="Legrain C."/>
            <person name="Charlier D.R.M."/>
            <person name="Mett I."/>
            <person name="Kochikyan A."/>
            <person name="Savchenko A."/>
            <person name="Boyen A."/>
            <person name="Falmagne P."/>
            <person name="Pirard A."/>
            <person name="Glansdorff N."/>
        </authorList>
    </citation>
    <scope>NUCLEOTIDE SEQUENCE [GENOMIC DNA] OF 60-409</scope>
    <source>
        <strain>NCIMB 8224 / CCM 2186 / NCA C-1235.1 / VKM B-718</strain>
    </source>
</reference>
<evidence type="ECO:0000250" key="1">
    <source>
        <dbReference type="UniProtKB" id="Q53389"/>
    </source>
</evidence>
<evidence type="ECO:0000250" key="2">
    <source>
        <dbReference type="UniProtKB" id="Q6DTN4"/>
    </source>
</evidence>
<evidence type="ECO:0000269" key="3">
    <source>
    </source>
</evidence>
<evidence type="ECO:0000303" key="4">
    <source>
    </source>
</evidence>
<evidence type="ECO:0000305" key="5"/>
<evidence type="ECO:0000305" key="6">
    <source>
    </source>
</evidence>
<name>AMAB1_GEOSE</name>
<feature type="chain" id="PRO_0000061952" description="N-carbamoyl-L-amino acid amidohydrolase">
    <location>
        <begin position="1"/>
        <end position="409"/>
    </location>
</feature>
<feature type="region of interest" description="Involved in dimerization" evidence="1">
    <location>
        <begin position="208"/>
        <end position="325"/>
    </location>
</feature>
<feature type="binding site" evidence="2">
    <location>
        <position position="79"/>
    </location>
    <ligand>
        <name>a divalent metal cation</name>
        <dbReference type="ChEBI" id="CHEBI:60240"/>
        <label>1</label>
    </ligand>
</feature>
<feature type="binding site" evidence="2">
    <location>
        <position position="90"/>
    </location>
    <ligand>
        <name>a divalent metal cation</name>
        <dbReference type="ChEBI" id="CHEBI:60240"/>
        <label>1</label>
    </ligand>
</feature>
<feature type="binding site" evidence="2">
    <location>
        <position position="90"/>
    </location>
    <ligand>
        <name>a divalent metal cation</name>
        <dbReference type="ChEBI" id="CHEBI:60240"/>
        <label>2</label>
    </ligand>
</feature>
<feature type="binding site" evidence="2">
    <location>
        <position position="125"/>
    </location>
    <ligand>
        <name>a divalent metal cation</name>
        <dbReference type="ChEBI" id="CHEBI:60240"/>
        <label>2</label>
    </ligand>
</feature>
<feature type="binding site" evidence="2">
    <location>
        <position position="189"/>
    </location>
    <ligand>
        <name>a divalent metal cation</name>
        <dbReference type="ChEBI" id="CHEBI:60240"/>
        <label>1</label>
    </ligand>
</feature>
<feature type="binding site" evidence="2">
    <location>
        <position position="192"/>
    </location>
    <ligand>
        <name>an N-carbamoyl-L-alpha-amino acid</name>
        <dbReference type="ChEBI" id="CHEBI:58865"/>
    </ligand>
</feature>
<feature type="binding site" evidence="2">
    <location>
        <position position="225"/>
    </location>
    <ligand>
        <name>an N-carbamoyl-L-alpha-amino acid</name>
        <dbReference type="ChEBI" id="CHEBI:58865"/>
    </ligand>
</feature>
<feature type="binding site" evidence="2">
    <location>
        <position position="273"/>
    </location>
    <ligand>
        <name>an N-carbamoyl-L-alpha-amino acid</name>
        <dbReference type="ChEBI" id="CHEBI:58865"/>
    </ligand>
</feature>
<feature type="binding site" evidence="2">
    <location>
        <position position="286"/>
    </location>
    <ligand>
        <name>an N-carbamoyl-L-alpha-amino acid</name>
        <dbReference type="ChEBI" id="CHEBI:58865"/>
    </ligand>
</feature>
<feature type="binding site" evidence="2">
    <location>
        <position position="355"/>
    </location>
    <ligand>
        <name>an N-carbamoyl-L-alpha-amino acid</name>
        <dbReference type="ChEBI" id="CHEBI:58865"/>
    </ligand>
</feature>
<feature type="binding site" evidence="2">
    <location>
        <position position="380"/>
    </location>
    <ligand>
        <name>a divalent metal cation</name>
        <dbReference type="ChEBI" id="CHEBI:60240"/>
        <label>2</label>
    </ligand>
</feature>
<feature type="site" description="Necessary for dimerization" evidence="1">
    <location>
        <position position="234"/>
    </location>
</feature>
<feature type="sequence conflict" description="In Ref. 2; CAA52341." evidence="5" ref="2">
    <original>LIG</original>
    <variation>DRE</variation>
    <location>
        <begin position="60"/>
        <end position="62"/>
    </location>
</feature>
<protein>
    <recommendedName>
        <fullName evidence="6">N-carbamoyl-L-amino acid amidohydrolase</fullName>
        <ecNumber evidence="3">3.5.1.87</ecNumber>
    </recommendedName>
    <alternativeName>
        <fullName evidence="4">L-carbamoylase</fullName>
    </alternativeName>
</protein>
<keyword id="KW-0170">Cobalt</keyword>
<keyword id="KW-0378">Hydrolase</keyword>
<keyword id="KW-0408">Iron</keyword>
<keyword id="KW-0464">Manganese</keyword>
<keyword id="KW-0479">Metal-binding</keyword>
<keyword id="KW-0533">Nickel</keyword>
<accession>P37113</accession>
<accession>P94345</accession>
<organism>
    <name type="scientific">Geobacillus stearothermophilus</name>
    <name type="common">Bacillus stearothermophilus</name>
    <dbReference type="NCBI Taxonomy" id="1422"/>
    <lineage>
        <taxon>Bacteria</taxon>
        <taxon>Bacillati</taxon>
        <taxon>Bacillota</taxon>
        <taxon>Bacilli</taxon>
        <taxon>Bacillales</taxon>
        <taxon>Anoxybacillaceae</taxon>
        <taxon>Geobacillus</taxon>
    </lineage>
</organism>
<sequence length="409" mass="44167">MIQGERLWQRLMELGEVGKQPSGGVTRLSFTAEERRAKDLVASYMREAGLFVYEDAAGNLIGRKEGTNPDATVVLVGSHLDSVYNGGCFDGPLGVLAGVEVVQTMNEHGVVTHHPIEVVAFTDEEGARFRFGMIGSRAMAGTLPPEALECRDAEGISLAEAMKQAGLDPDRLPQAARKPGTVKAYVELHIEQGRVLEEAGLPVGIVTGIAGLIWVKFTIAGPAEHAGATPMSLRRDPMAAAAQIIIVIEEEARRTGTTVGTVGQLHVYPGGINVIPERVEFVLDLRDLKAEVRDQVWKAIAVRAETIAKERNVRLTTERLQEMAPVLCSEVVKQAAERACKQLGYPPFWLPSGAAHDGVQLAPICPIGMIFVRSQDGVSHSPAEWSTKEDCAVGAEVLYHTVWQLAQGE</sequence>
<dbReference type="EC" id="3.5.1.87" evidence="3"/>
<dbReference type="EMBL" id="Y08752">
    <property type="protein sequence ID" value="CAA69999.1"/>
    <property type="molecule type" value="Genomic_DNA"/>
</dbReference>
<dbReference type="EMBL" id="X74289">
    <property type="protein sequence ID" value="CAA52341.1"/>
    <property type="molecule type" value="Genomic_DNA"/>
</dbReference>
<dbReference type="SMR" id="P37113"/>
<dbReference type="GO" id="GO:0016813">
    <property type="term" value="F:hydrolase activity, acting on carbon-nitrogen (but not peptide) bonds, in linear amidines"/>
    <property type="evidence" value="ECO:0007669"/>
    <property type="project" value="InterPro"/>
</dbReference>
<dbReference type="GO" id="GO:0046872">
    <property type="term" value="F:metal ion binding"/>
    <property type="evidence" value="ECO:0007669"/>
    <property type="project" value="UniProtKB-KW"/>
</dbReference>
<dbReference type="GO" id="GO:0050538">
    <property type="term" value="F:N-carbamoyl-L-amino-acid hydrolase activity"/>
    <property type="evidence" value="ECO:0007669"/>
    <property type="project" value="UniProtKB-EC"/>
</dbReference>
<dbReference type="CDD" id="cd03884">
    <property type="entry name" value="M20_bAS"/>
    <property type="match status" value="1"/>
</dbReference>
<dbReference type="FunFam" id="3.40.630.10:FF:000044">
    <property type="entry name" value="Allantoate amidohydrolase"/>
    <property type="match status" value="1"/>
</dbReference>
<dbReference type="Gene3D" id="3.30.70.360">
    <property type="match status" value="1"/>
</dbReference>
<dbReference type="Gene3D" id="3.40.630.10">
    <property type="entry name" value="Zn peptidases"/>
    <property type="match status" value="1"/>
</dbReference>
<dbReference type="InterPro" id="IPR010158">
    <property type="entry name" value="Amidase_Cbmase"/>
</dbReference>
<dbReference type="InterPro" id="IPR036264">
    <property type="entry name" value="Bact_exopeptidase_dim_dom"/>
</dbReference>
<dbReference type="InterPro" id="IPR002933">
    <property type="entry name" value="Peptidase_M20"/>
</dbReference>
<dbReference type="InterPro" id="IPR011650">
    <property type="entry name" value="Peptidase_M20_dimer"/>
</dbReference>
<dbReference type="NCBIfam" id="TIGR01879">
    <property type="entry name" value="hydantase"/>
    <property type="match status" value="1"/>
</dbReference>
<dbReference type="NCBIfam" id="NF006771">
    <property type="entry name" value="PRK09290.1-5"/>
    <property type="match status" value="1"/>
</dbReference>
<dbReference type="PANTHER" id="PTHR32494">
    <property type="entry name" value="ALLANTOATE DEIMINASE-RELATED"/>
    <property type="match status" value="1"/>
</dbReference>
<dbReference type="PANTHER" id="PTHR32494:SF19">
    <property type="entry name" value="ALLANTOATE DEIMINASE-RELATED"/>
    <property type="match status" value="1"/>
</dbReference>
<dbReference type="Pfam" id="PF07687">
    <property type="entry name" value="M20_dimer"/>
    <property type="match status" value="1"/>
</dbReference>
<dbReference type="Pfam" id="PF01546">
    <property type="entry name" value="Peptidase_M20"/>
    <property type="match status" value="1"/>
</dbReference>
<dbReference type="PIRSF" id="PIRSF001235">
    <property type="entry name" value="Amidase_carbamoylase"/>
    <property type="match status" value="1"/>
</dbReference>
<dbReference type="SUPFAM" id="SSF55031">
    <property type="entry name" value="Bacterial exopeptidase dimerisation domain"/>
    <property type="match status" value="1"/>
</dbReference>
<dbReference type="SUPFAM" id="SSF53187">
    <property type="entry name" value="Zn-dependent exopeptidases"/>
    <property type="match status" value="1"/>
</dbReference>
<gene>
    <name evidence="4" type="primary">amaB</name>
</gene>